<organism>
    <name type="scientific">Thermococcus gammatolerans (strain DSM 15229 / JCM 11827 / EJ3)</name>
    <dbReference type="NCBI Taxonomy" id="593117"/>
    <lineage>
        <taxon>Archaea</taxon>
        <taxon>Methanobacteriati</taxon>
        <taxon>Methanobacteriota</taxon>
        <taxon>Thermococci</taxon>
        <taxon>Thermococcales</taxon>
        <taxon>Thermococcaceae</taxon>
        <taxon>Thermococcus</taxon>
    </lineage>
</organism>
<sequence>MEEKKTGTTTVGIKVKEGVVLAADTQASLGNMVETLNIRKILPITDRIAITTAGSVGDVQALARMLEAQARYYQFTWGRPMTTRAMANLLSNILNENKWFPYMVQIIIGGYVDKPELASVDALGGLVFEKYTATGSGSPFAIAIIEDGYREDMSIEEAKELAVRAVKTAGKRDVYTGERKVQVVVITKDGMKEEFVEFKE</sequence>
<feature type="propeptide" id="PRO_0000397464" description="Removed in mature form; by autocatalysis" evidence="1">
    <location>
        <begin position="1"/>
        <end position="7"/>
    </location>
</feature>
<feature type="chain" id="PRO_0000397465" description="Proteasome subunit beta 2">
    <location>
        <begin position="8"/>
        <end position="200"/>
    </location>
</feature>
<feature type="active site" description="Nucleophile" evidence="1">
    <location>
        <position position="8"/>
    </location>
</feature>
<keyword id="KW-0068">Autocatalytic cleavage</keyword>
<keyword id="KW-0963">Cytoplasm</keyword>
<keyword id="KW-0378">Hydrolase</keyword>
<keyword id="KW-0645">Protease</keyword>
<keyword id="KW-0647">Proteasome</keyword>
<keyword id="KW-1185">Reference proteome</keyword>
<keyword id="KW-0888">Threonine protease</keyword>
<keyword id="KW-0865">Zymogen</keyword>
<gene>
    <name evidence="1" type="primary">psmB2</name>
    <name type="synonym">psmB-2</name>
    <name type="ordered locus">TGAM_2052</name>
</gene>
<comment type="function">
    <text evidence="1">Component of the proteasome core, a large protease complex with broad specificity involved in protein degradation.</text>
</comment>
<comment type="catalytic activity">
    <reaction evidence="1">
        <text>Cleavage of peptide bonds with very broad specificity.</text>
        <dbReference type="EC" id="3.4.25.1"/>
    </reaction>
</comment>
<comment type="activity regulation">
    <text evidence="1">The formation of the proteasomal ATPase PAN-20S proteasome complex, via the docking of the C-termini of PAN into the intersubunit pockets in the alpha-rings, triggers opening of the gate for substrate entry. Interconversion between the open-gate and close-gate conformations leads to a dynamic regulation of the 20S proteasome proteolysis activity.</text>
</comment>
<comment type="subunit">
    <text evidence="1">The 20S proteasome core is composed of 14 alpha and 14 beta subunits that assemble into four stacked heptameric rings, resulting in a barrel-shaped structure. The two inner rings, each composed of seven catalytic beta subunits, are sandwiched by two outer rings, each composed of seven alpha subunits. The catalytic chamber with the active sites is on the inside of the barrel. Has a gated structure, the ends of the cylinder being occluded by the N-termini of the alpha-subunits. Is capped at one or both ends by the proteasome regulatory ATPase, PAN.</text>
</comment>
<comment type="subcellular location">
    <subcellularLocation>
        <location evidence="1">Cytoplasm</location>
    </subcellularLocation>
</comment>
<comment type="similarity">
    <text evidence="1">Belongs to the peptidase T1B family.</text>
</comment>
<dbReference type="EC" id="3.4.25.1" evidence="1"/>
<dbReference type="EMBL" id="CP001398">
    <property type="protein sequence ID" value="ACS34554.1"/>
    <property type="molecule type" value="Genomic_DNA"/>
</dbReference>
<dbReference type="RefSeq" id="WP_015859657.1">
    <property type="nucleotide sequence ID" value="NC_012804.1"/>
</dbReference>
<dbReference type="SMR" id="C5A2D5"/>
<dbReference type="STRING" id="593117.TGAM_2052"/>
<dbReference type="MEROPS" id="T01.002"/>
<dbReference type="PaxDb" id="593117-TGAM_2052"/>
<dbReference type="GeneID" id="7988618"/>
<dbReference type="KEGG" id="tga:TGAM_2052"/>
<dbReference type="PATRIC" id="fig|593117.10.peg.2063"/>
<dbReference type="eggNOG" id="arCOG00970">
    <property type="taxonomic scope" value="Archaea"/>
</dbReference>
<dbReference type="HOGENOM" id="CLU_035750_7_2_2"/>
<dbReference type="OrthoDB" id="6330at2157"/>
<dbReference type="Proteomes" id="UP000001488">
    <property type="component" value="Chromosome"/>
</dbReference>
<dbReference type="GO" id="GO:0005737">
    <property type="term" value="C:cytoplasm"/>
    <property type="evidence" value="ECO:0007669"/>
    <property type="project" value="UniProtKB-SubCell"/>
</dbReference>
<dbReference type="GO" id="GO:0019774">
    <property type="term" value="C:proteasome core complex, beta-subunit complex"/>
    <property type="evidence" value="ECO:0007669"/>
    <property type="project" value="UniProtKB-UniRule"/>
</dbReference>
<dbReference type="GO" id="GO:0004298">
    <property type="term" value="F:threonine-type endopeptidase activity"/>
    <property type="evidence" value="ECO:0007669"/>
    <property type="project" value="UniProtKB-UniRule"/>
</dbReference>
<dbReference type="GO" id="GO:0010498">
    <property type="term" value="P:proteasomal protein catabolic process"/>
    <property type="evidence" value="ECO:0007669"/>
    <property type="project" value="UniProtKB-UniRule"/>
</dbReference>
<dbReference type="CDD" id="cd03764">
    <property type="entry name" value="proteasome_beta_archeal"/>
    <property type="match status" value="1"/>
</dbReference>
<dbReference type="FunFam" id="3.60.20.10:FF:000049">
    <property type="entry name" value="Proteasome subunit beta"/>
    <property type="match status" value="1"/>
</dbReference>
<dbReference type="Gene3D" id="3.60.20.10">
    <property type="entry name" value="Glutamine Phosphoribosylpyrophosphate, subunit 1, domain 1"/>
    <property type="match status" value="1"/>
</dbReference>
<dbReference type="HAMAP" id="MF_02113_A">
    <property type="entry name" value="Proteasome_B_A"/>
    <property type="match status" value="1"/>
</dbReference>
<dbReference type="InterPro" id="IPR029055">
    <property type="entry name" value="Ntn_hydrolases_N"/>
</dbReference>
<dbReference type="InterPro" id="IPR019983">
    <property type="entry name" value="Pept_T1A_Psome_bsu_arc"/>
</dbReference>
<dbReference type="InterPro" id="IPR000243">
    <property type="entry name" value="Pept_T1A_subB"/>
</dbReference>
<dbReference type="InterPro" id="IPR016050">
    <property type="entry name" value="Proteasome_bsu_CS"/>
</dbReference>
<dbReference type="InterPro" id="IPR001353">
    <property type="entry name" value="Proteasome_sua/b"/>
</dbReference>
<dbReference type="InterPro" id="IPR023333">
    <property type="entry name" value="Proteasome_suB-type"/>
</dbReference>
<dbReference type="NCBIfam" id="TIGR03634">
    <property type="entry name" value="arc_protsome_B"/>
    <property type="match status" value="1"/>
</dbReference>
<dbReference type="PANTHER" id="PTHR32194:SF0">
    <property type="entry name" value="ATP-DEPENDENT PROTEASE SUBUNIT HSLV"/>
    <property type="match status" value="1"/>
</dbReference>
<dbReference type="PANTHER" id="PTHR32194">
    <property type="entry name" value="METALLOPROTEASE TLDD"/>
    <property type="match status" value="1"/>
</dbReference>
<dbReference type="Pfam" id="PF00227">
    <property type="entry name" value="Proteasome"/>
    <property type="match status" value="1"/>
</dbReference>
<dbReference type="PRINTS" id="PR00141">
    <property type="entry name" value="PROTEASOME"/>
</dbReference>
<dbReference type="SUPFAM" id="SSF56235">
    <property type="entry name" value="N-terminal nucleophile aminohydrolases (Ntn hydrolases)"/>
    <property type="match status" value="1"/>
</dbReference>
<dbReference type="PROSITE" id="PS00854">
    <property type="entry name" value="PROTEASOME_BETA_1"/>
    <property type="match status" value="1"/>
</dbReference>
<dbReference type="PROSITE" id="PS51476">
    <property type="entry name" value="PROTEASOME_BETA_2"/>
    <property type="match status" value="1"/>
</dbReference>
<reference key="1">
    <citation type="journal article" date="2007" name="Genome Biol.">
        <title>Genome analysis and genome-wide proteomics of Thermococcus gammatolerans, the most radioresistant organism known amongst the Archaea.</title>
        <authorList>
            <person name="Zivanovic Y."/>
            <person name="Armengaud J."/>
            <person name="Lagorce A."/>
            <person name="Leplat C."/>
            <person name="Guerin P."/>
            <person name="Dutertre M."/>
            <person name="Anthouard V."/>
            <person name="Forterre P."/>
            <person name="Wincker P."/>
            <person name="Confalonieri F."/>
        </authorList>
    </citation>
    <scope>NUCLEOTIDE SEQUENCE [LARGE SCALE GENOMIC DNA]</scope>
    <source>
        <strain>DSM 15229 / JCM 11827 / EJ3</strain>
    </source>
</reference>
<accession>C5A2D5</accession>
<name>PSB2_THEGJ</name>
<proteinExistence type="inferred from homology"/>
<protein>
    <recommendedName>
        <fullName evidence="1">Proteasome subunit beta 2</fullName>
        <ecNumber evidence="1">3.4.25.1</ecNumber>
    </recommendedName>
    <alternativeName>
        <fullName evidence="1">20S proteasome beta subunit 2</fullName>
    </alternativeName>
    <alternativeName>
        <fullName evidence="1">Proteasome core protein PsmB 2</fullName>
    </alternativeName>
</protein>
<evidence type="ECO:0000255" key="1">
    <source>
        <dbReference type="HAMAP-Rule" id="MF_02113"/>
    </source>
</evidence>